<accession>O25936</accession>
<reference key="1">
    <citation type="journal article" date="1997" name="Nature">
        <title>The complete genome sequence of the gastric pathogen Helicobacter pylori.</title>
        <authorList>
            <person name="Tomb J.-F."/>
            <person name="White O."/>
            <person name="Kerlavage A.R."/>
            <person name="Clayton R.A."/>
            <person name="Sutton G.G."/>
            <person name="Fleischmann R.D."/>
            <person name="Ketchum K.A."/>
            <person name="Klenk H.-P."/>
            <person name="Gill S.R."/>
            <person name="Dougherty B.A."/>
            <person name="Nelson K.E."/>
            <person name="Quackenbush J."/>
            <person name="Zhou L."/>
            <person name="Kirkness E.F."/>
            <person name="Peterson S.N."/>
            <person name="Loftus B.J."/>
            <person name="Richardson D.L."/>
            <person name="Dodson R.J."/>
            <person name="Khalak H.G."/>
            <person name="Glodek A."/>
            <person name="McKenney K."/>
            <person name="FitzGerald L.M."/>
            <person name="Lee N."/>
            <person name="Adams M.D."/>
            <person name="Hickey E.K."/>
            <person name="Berg D.E."/>
            <person name="Gocayne J.D."/>
            <person name="Utterback T.R."/>
            <person name="Peterson J.D."/>
            <person name="Kelley J.M."/>
            <person name="Cotton M.D."/>
            <person name="Weidman J.F."/>
            <person name="Fujii C."/>
            <person name="Bowman C."/>
            <person name="Watthey L."/>
            <person name="Wallin E."/>
            <person name="Hayes W.S."/>
            <person name="Borodovsky M."/>
            <person name="Karp P.D."/>
            <person name="Smith H.O."/>
            <person name="Fraser C.M."/>
            <person name="Venter J.C."/>
        </authorList>
    </citation>
    <scope>NUCLEOTIDE SEQUENCE [LARGE SCALE GENOMIC DNA]</scope>
    <source>
        <strain>ATCC 700392 / 26695</strain>
    </source>
</reference>
<feature type="chain" id="PRO_0000200495" description="Fructose-1,6-bisphosphatase class 1">
    <location>
        <begin position="1"/>
        <end position="290"/>
    </location>
</feature>
<feature type="binding site" evidence="1">
    <location>
        <position position="78"/>
    </location>
    <ligand>
        <name>Mg(2+)</name>
        <dbReference type="ChEBI" id="CHEBI:18420"/>
        <label>1</label>
    </ligand>
</feature>
<feature type="binding site" evidence="1">
    <location>
        <position position="96"/>
    </location>
    <ligand>
        <name>Mg(2+)</name>
        <dbReference type="ChEBI" id="CHEBI:18420"/>
        <label>1</label>
    </ligand>
</feature>
<feature type="binding site" evidence="1">
    <location>
        <position position="96"/>
    </location>
    <ligand>
        <name>Mg(2+)</name>
        <dbReference type="ChEBI" id="CHEBI:18420"/>
        <label>2</label>
    </ligand>
</feature>
<feature type="binding site" evidence="1">
    <location>
        <position position="98"/>
    </location>
    <ligand>
        <name>Mg(2+)</name>
        <dbReference type="ChEBI" id="CHEBI:18420"/>
        <label>1</label>
    </ligand>
</feature>
<feature type="binding site" evidence="1">
    <location>
        <begin position="99"/>
        <end position="102"/>
    </location>
    <ligand>
        <name>substrate</name>
    </ligand>
</feature>
<feature type="binding site" evidence="1">
    <location>
        <position position="99"/>
    </location>
    <ligand>
        <name>Mg(2+)</name>
        <dbReference type="ChEBI" id="CHEBI:18420"/>
        <label>2</label>
    </ligand>
</feature>
<feature type="binding site" evidence="1">
    <location>
        <position position="201"/>
    </location>
    <ligand>
        <name>substrate</name>
    </ligand>
</feature>
<feature type="binding site" evidence="1">
    <location>
        <position position="226"/>
    </location>
    <ligand>
        <name>substrate</name>
    </ligand>
</feature>
<feature type="binding site" evidence="1">
    <location>
        <position position="232"/>
    </location>
    <ligand>
        <name>Mg(2+)</name>
        <dbReference type="ChEBI" id="CHEBI:18420"/>
        <label>2</label>
    </ligand>
</feature>
<dbReference type="EC" id="3.1.3.11" evidence="1"/>
<dbReference type="EMBL" id="AE000511">
    <property type="protein sequence ID" value="AAD08424.1"/>
    <property type="molecule type" value="Genomic_DNA"/>
</dbReference>
<dbReference type="PIR" id="A64693">
    <property type="entry name" value="A64693"/>
</dbReference>
<dbReference type="RefSeq" id="NP_208176.1">
    <property type="nucleotide sequence ID" value="NC_000915.1"/>
</dbReference>
<dbReference type="RefSeq" id="WP_000384644.1">
    <property type="nucleotide sequence ID" value="NC_018939.1"/>
</dbReference>
<dbReference type="SMR" id="O25936"/>
<dbReference type="FunCoup" id="O25936">
    <property type="interactions" value="283"/>
</dbReference>
<dbReference type="IntAct" id="O25936">
    <property type="interactions" value="1"/>
</dbReference>
<dbReference type="MINT" id="O25936"/>
<dbReference type="STRING" id="85962.HP_1385"/>
<dbReference type="PaxDb" id="85962-C694_07150"/>
<dbReference type="EnsemblBacteria" id="AAD08424">
    <property type="protein sequence ID" value="AAD08424"/>
    <property type="gene ID" value="HP_1385"/>
</dbReference>
<dbReference type="KEGG" id="heo:C694_07150"/>
<dbReference type="KEGG" id="hpy:HP_1385"/>
<dbReference type="PATRIC" id="fig|85962.47.peg.1483"/>
<dbReference type="eggNOG" id="COG0158">
    <property type="taxonomic scope" value="Bacteria"/>
</dbReference>
<dbReference type="InParanoid" id="O25936"/>
<dbReference type="OrthoDB" id="9806756at2"/>
<dbReference type="PhylomeDB" id="O25936"/>
<dbReference type="UniPathway" id="UPA00138"/>
<dbReference type="Proteomes" id="UP000000429">
    <property type="component" value="Chromosome"/>
</dbReference>
<dbReference type="GO" id="GO:0005737">
    <property type="term" value="C:cytoplasm"/>
    <property type="evidence" value="ECO:0000318"/>
    <property type="project" value="GO_Central"/>
</dbReference>
<dbReference type="GO" id="GO:0005829">
    <property type="term" value="C:cytosol"/>
    <property type="evidence" value="ECO:0000318"/>
    <property type="project" value="GO_Central"/>
</dbReference>
<dbReference type="GO" id="GO:0042132">
    <property type="term" value="F:fructose 1,6-bisphosphate 1-phosphatase activity"/>
    <property type="evidence" value="ECO:0000318"/>
    <property type="project" value="GO_Central"/>
</dbReference>
<dbReference type="GO" id="GO:0000287">
    <property type="term" value="F:magnesium ion binding"/>
    <property type="evidence" value="ECO:0007669"/>
    <property type="project" value="UniProtKB-UniRule"/>
</dbReference>
<dbReference type="GO" id="GO:0030388">
    <property type="term" value="P:fructose 1,6-bisphosphate metabolic process"/>
    <property type="evidence" value="ECO:0000318"/>
    <property type="project" value="GO_Central"/>
</dbReference>
<dbReference type="GO" id="GO:0006002">
    <property type="term" value="P:fructose 6-phosphate metabolic process"/>
    <property type="evidence" value="ECO:0000318"/>
    <property type="project" value="GO_Central"/>
</dbReference>
<dbReference type="GO" id="GO:0006000">
    <property type="term" value="P:fructose metabolic process"/>
    <property type="evidence" value="ECO:0000318"/>
    <property type="project" value="GO_Central"/>
</dbReference>
<dbReference type="GO" id="GO:0006094">
    <property type="term" value="P:gluconeogenesis"/>
    <property type="evidence" value="ECO:0000318"/>
    <property type="project" value="GO_Central"/>
</dbReference>
<dbReference type="FunFam" id="3.30.540.10:FF:000036">
    <property type="entry name" value="Fructose-1,6-bisphosphatase class 1"/>
    <property type="match status" value="1"/>
</dbReference>
<dbReference type="FunFam" id="3.40.190.80:FF:000028">
    <property type="entry name" value="Fructose-1,6-bisphosphatase class 1"/>
    <property type="match status" value="1"/>
</dbReference>
<dbReference type="Gene3D" id="3.40.190.80">
    <property type="match status" value="1"/>
</dbReference>
<dbReference type="Gene3D" id="3.30.540.10">
    <property type="entry name" value="Fructose-1,6-Bisphosphatase, subunit A, domain 1"/>
    <property type="match status" value="1"/>
</dbReference>
<dbReference type="HAMAP" id="MF_01855">
    <property type="entry name" value="FBPase_class1"/>
    <property type="match status" value="1"/>
</dbReference>
<dbReference type="InterPro" id="IPR044015">
    <property type="entry name" value="FBPase_C_dom"/>
</dbReference>
<dbReference type="InterPro" id="IPR000146">
    <property type="entry name" value="FBPase_class-1"/>
</dbReference>
<dbReference type="InterPro" id="IPR033391">
    <property type="entry name" value="FBPase_N"/>
</dbReference>
<dbReference type="InterPro" id="IPR028343">
    <property type="entry name" value="FBPtase"/>
</dbReference>
<dbReference type="InterPro" id="IPR023079">
    <property type="entry name" value="SBPase"/>
</dbReference>
<dbReference type="NCBIfam" id="NF006781">
    <property type="entry name" value="PRK09293.2-1"/>
    <property type="match status" value="1"/>
</dbReference>
<dbReference type="PANTHER" id="PTHR11556">
    <property type="entry name" value="FRUCTOSE-1,6-BISPHOSPHATASE-RELATED"/>
    <property type="match status" value="1"/>
</dbReference>
<dbReference type="PANTHER" id="PTHR11556:SF35">
    <property type="entry name" value="SEDOHEPTULOSE-1,7-BISPHOSPHATASE, CHLOROPLASTIC"/>
    <property type="match status" value="1"/>
</dbReference>
<dbReference type="Pfam" id="PF00316">
    <property type="entry name" value="FBPase"/>
    <property type="match status" value="1"/>
</dbReference>
<dbReference type="Pfam" id="PF18913">
    <property type="entry name" value="FBPase_C"/>
    <property type="match status" value="1"/>
</dbReference>
<dbReference type="PIRSF" id="PIRSF500210">
    <property type="entry name" value="FBPtase"/>
    <property type="match status" value="1"/>
</dbReference>
<dbReference type="PIRSF" id="PIRSF000904">
    <property type="entry name" value="FBPtase_SBPase"/>
    <property type="match status" value="1"/>
</dbReference>
<dbReference type="PRINTS" id="PR01958">
    <property type="entry name" value="S17BPHPHTASE"/>
</dbReference>
<dbReference type="SUPFAM" id="SSF56655">
    <property type="entry name" value="Carbohydrate phosphatase"/>
    <property type="match status" value="1"/>
</dbReference>
<keyword id="KW-0119">Carbohydrate metabolism</keyword>
<keyword id="KW-0963">Cytoplasm</keyword>
<keyword id="KW-0378">Hydrolase</keyword>
<keyword id="KW-0460">Magnesium</keyword>
<keyword id="KW-0479">Metal-binding</keyword>
<keyword id="KW-1185">Reference proteome</keyword>
<proteinExistence type="inferred from homology"/>
<organism>
    <name type="scientific">Helicobacter pylori (strain ATCC 700392 / 26695)</name>
    <name type="common">Campylobacter pylori</name>
    <dbReference type="NCBI Taxonomy" id="85962"/>
    <lineage>
        <taxon>Bacteria</taxon>
        <taxon>Pseudomonadati</taxon>
        <taxon>Campylobacterota</taxon>
        <taxon>Epsilonproteobacteria</taxon>
        <taxon>Campylobacterales</taxon>
        <taxon>Helicobacteraceae</taxon>
        <taxon>Helicobacter</taxon>
    </lineage>
</organism>
<name>F16PA_HELPY</name>
<evidence type="ECO:0000255" key="1">
    <source>
        <dbReference type="HAMAP-Rule" id="MF_01855"/>
    </source>
</evidence>
<sequence>MDYKCFKGKHANIVIEIISLLEKGVKKAQEILEKPDAGSYTKLENSSGDTPIKADLALDKFLEENFLSLENIKSVFSEEKETPVTKENGSYLIAYDPLDGSSVMEANFLVGTIIGIYEKDYKAQNLAASLYVVFGHKIELVVALEEVYRYSFYQNKFHFIETIVLENKGKIVASGGNQKDFSLGLKKALEGFFAENYRLRYSGSMVADVHHVLVKKGGMFSYPQKKLRKLFEVFPLALMVEKAKGEAFYFDKGVKKRLLEQSVENYHEKSECYLASQHEAHILEKYLKGE</sequence>
<gene>
    <name evidence="1" type="primary">fbp</name>
    <name type="ordered locus">HP_1385</name>
</gene>
<protein>
    <recommendedName>
        <fullName evidence="1">Fructose-1,6-bisphosphatase class 1</fullName>
        <shortName evidence="1">FBPase class 1</shortName>
        <ecNumber evidence="1">3.1.3.11</ecNumber>
    </recommendedName>
    <alternativeName>
        <fullName evidence="1">D-fructose-1,6-bisphosphate 1-phosphohydrolase class 1</fullName>
    </alternativeName>
</protein>
<comment type="catalytic activity">
    <reaction evidence="1">
        <text>beta-D-fructose 1,6-bisphosphate + H2O = beta-D-fructose 6-phosphate + phosphate</text>
        <dbReference type="Rhea" id="RHEA:11064"/>
        <dbReference type="ChEBI" id="CHEBI:15377"/>
        <dbReference type="ChEBI" id="CHEBI:32966"/>
        <dbReference type="ChEBI" id="CHEBI:43474"/>
        <dbReference type="ChEBI" id="CHEBI:57634"/>
        <dbReference type="EC" id="3.1.3.11"/>
    </reaction>
</comment>
<comment type="cofactor">
    <cofactor evidence="1">
        <name>Mg(2+)</name>
        <dbReference type="ChEBI" id="CHEBI:18420"/>
    </cofactor>
    <text evidence="1">Binds 2 magnesium ions per subunit.</text>
</comment>
<comment type="pathway">
    <text evidence="1">Carbohydrate biosynthesis; gluconeogenesis.</text>
</comment>
<comment type="subunit">
    <text evidence="1">Homotetramer.</text>
</comment>
<comment type="subcellular location">
    <subcellularLocation>
        <location evidence="1">Cytoplasm</location>
    </subcellularLocation>
</comment>
<comment type="similarity">
    <text evidence="1">Belongs to the FBPase class 1 family.</text>
</comment>